<accession>P81400</accession>
<feature type="initiator methionine" description="Removed" evidence="3">
    <location>
        <position position="1"/>
    </location>
</feature>
<feature type="chain" id="PRO_0000067344" description="Fatty acid-binding protein 2, liver">
    <location>
        <begin position="2"/>
        <end position="126"/>
    </location>
</feature>
<feature type="binding site">
    <location>
        <begin position="54"/>
        <end position="56"/>
    </location>
    <ligand>
        <name>cholate</name>
        <dbReference type="ChEBI" id="CHEBI:29747"/>
        <label>1</label>
    </ligand>
</feature>
<feature type="binding site">
    <location>
        <begin position="99"/>
        <end position="101"/>
    </location>
    <ligand>
        <name>cholate</name>
        <dbReference type="ChEBI" id="CHEBI:29747"/>
        <label>2</label>
    </ligand>
</feature>
<feature type="binding site" evidence="2">
    <location>
        <position position="121"/>
    </location>
    <ligand>
        <name>cholate</name>
        <dbReference type="ChEBI" id="CHEBI:29747"/>
        <label>1</label>
    </ligand>
</feature>
<feature type="strand" evidence="6">
    <location>
        <begin position="5"/>
        <end position="13"/>
    </location>
</feature>
<feature type="helix" evidence="6">
    <location>
        <begin position="15"/>
        <end position="22"/>
    </location>
</feature>
<feature type="helix" evidence="6">
    <location>
        <begin position="26"/>
        <end position="32"/>
    </location>
</feature>
<feature type="strand" evidence="6">
    <location>
        <begin position="38"/>
        <end position="53"/>
    </location>
</feature>
<feature type="strand" evidence="6">
    <location>
        <begin position="58"/>
        <end position="64"/>
    </location>
</feature>
<feature type="strand" evidence="6">
    <location>
        <begin position="69"/>
        <end position="72"/>
    </location>
</feature>
<feature type="helix" evidence="5">
    <location>
        <begin position="74"/>
        <end position="76"/>
    </location>
</feature>
<feature type="strand" evidence="6">
    <location>
        <begin position="78"/>
        <end position="81"/>
    </location>
</feature>
<feature type="strand" evidence="6">
    <location>
        <begin position="84"/>
        <end position="86"/>
    </location>
</feature>
<feature type="strand" evidence="6">
    <location>
        <begin position="89"/>
        <end position="93"/>
    </location>
</feature>
<feature type="strand" evidence="6">
    <location>
        <begin position="95"/>
        <end position="104"/>
    </location>
</feature>
<feature type="strand" evidence="6">
    <location>
        <begin position="107"/>
        <end position="114"/>
    </location>
</feature>
<feature type="strand" evidence="6">
    <location>
        <begin position="117"/>
        <end position="125"/>
    </location>
</feature>
<sequence>MPFNGTWQVYSQENYEAFLRAVGLPEDIINVAKDINPIIEIQQNGDNFVVTSKTPNQSVTNSFTIGKEAEITSMGGKKIKCTVVLEGGKLVSKTDQFSHIQEVKGNEMVETLTVGGATLIRRSKRV</sequence>
<evidence type="ECO:0000250" key="1"/>
<evidence type="ECO:0000269" key="2">
    <source>
    </source>
</evidence>
<evidence type="ECO:0000269" key="3">
    <source>
    </source>
</evidence>
<evidence type="ECO:0000305" key="4"/>
<evidence type="ECO:0007829" key="5">
    <source>
        <dbReference type="PDB" id="2FT9"/>
    </source>
</evidence>
<evidence type="ECO:0007829" key="6">
    <source>
        <dbReference type="PDB" id="2FTB"/>
    </source>
</evidence>
<proteinExistence type="evidence at protein level"/>
<organism>
    <name type="scientific">Ambystoma mexicanum</name>
    <name type="common">Axolotl</name>
    <dbReference type="NCBI Taxonomy" id="8296"/>
    <lineage>
        <taxon>Eukaryota</taxon>
        <taxon>Metazoa</taxon>
        <taxon>Chordata</taxon>
        <taxon>Craniata</taxon>
        <taxon>Vertebrata</taxon>
        <taxon>Euteleostomi</taxon>
        <taxon>Amphibia</taxon>
        <taxon>Batrachia</taxon>
        <taxon>Caudata</taxon>
        <taxon>Salamandroidea</taxon>
        <taxon>Ambystomatidae</taxon>
        <taxon>Ambystoma</taxon>
    </lineage>
</organism>
<keyword id="KW-0002">3D-structure</keyword>
<keyword id="KW-0963">Cytoplasm</keyword>
<keyword id="KW-0903">Direct protein sequencing</keyword>
<keyword id="KW-0446">Lipid-binding</keyword>
<keyword id="KW-0813">Transport</keyword>
<comment type="function">
    <text evidence="1">Binds free fatty acids and their coenzyme A derivatives, bilirubin, and some other small molecules in the cytoplasm. May be involved in intracellular lipid transport (By similarity). The specificity of axolotl L-FABP differs from that of LB-FABP. Binds 2 ligands per protein molecule.</text>
</comment>
<comment type="subcellular location">
    <subcellularLocation>
        <location>Cytoplasm</location>
    </subcellularLocation>
</comment>
<comment type="domain">
    <text>Forms a beta-barrel structure that accommodates hydrophobic ligands in its interior.</text>
</comment>
<comment type="similarity">
    <text evidence="4">Belongs to the calycin superfamily. Fatty-acid binding protein (FABP) family.</text>
</comment>
<reference key="1">
    <citation type="journal article" date="1999" name="Eur. J. Biochem.">
        <title>Isolation, amino acid sequence determination and binding properties of two fatty-acid-binding proteins from axolotl (Ambistoma mexicanum) liver. Evolutionary relationship.</title>
        <authorList>
            <person name="Di Pietro S.M."/>
            <person name="Veerkamp J.H."/>
            <person name="Santome J.A."/>
        </authorList>
    </citation>
    <scope>PROTEIN SEQUENCE OF 2-126</scope>
    <source>
        <tissue>Liver</tissue>
    </source>
</reference>
<reference key="2">
    <citation type="journal article" date="2006" name="Proteins">
        <title>Crystal structure of axolotl (Ambystoma mexicanum) liver bile acid-binding protein bound to cholic and oleic acid.</title>
        <authorList>
            <person name="Capaldi S."/>
            <person name="Guariento M."/>
            <person name="Perduca M."/>
            <person name="Di Pietro S.M."/>
            <person name="Santome J.A."/>
            <person name="Monaco H.L."/>
        </authorList>
    </citation>
    <scope>X-RAY CRYSTALLOGRAPHY (2.0 ANGSTROMS) IN COMPLEX WITH CHOLATE AND OLEATE</scope>
</reference>
<name>FABP2_AMBME</name>
<protein>
    <recommendedName>
        <fullName>Fatty acid-binding protein 2, liver</fullName>
    </recommendedName>
    <alternativeName>
        <fullName>Liver basic FABP</fullName>
        <shortName>LB-FABP</shortName>
    </alternativeName>
    <alternativeName>
        <fullName>Liver-type fatty acid-binding protein</fullName>
        <shortName>L-FABP</shortName>
    </alternativeName>
</protein>
<dbReference type="PDB" id="2FT9">
    <property type="method" value="X-ray"/>
    <property type="resolution" value="2.50 A"/>
    <property type="chains" value="A=2-126"/>
</dbReference>
<dbReference type="PDB" id="2FTB">
    <property type="method" value="X-ray"/>
    <property type="resolution" value="2.00 A"/>
    <property type="chains" value="A=2-126"/>
</dbReference>
<dbReference type="PDBsum" id="2FT9"/>
<dbReference type="PDBsum" id="2FTB"/>
<dbReference type="SMR" id="P81400"/>
<dbReference type="EvolutionaryTrace" id="P81400"/>
<dbReference type="GO" id="GO:0005737">
    <property type="term" value="C:cytoplasm"/>
    <property type="evidence" value="ECO:0007669"/>
    <property type="project" value="UniProtKB-SubCell"/>
</dbReference>
<dbReference type="GO" id="GO:0008289">
    <property type="term" value="F:lipid binding"/>
    <property type="evidence" value="ECO:0007669"/>
    <property type="project" value="UniProtKB-KW"/>
</dbReference>
<dbReference type="CDD" id="cd19447">
    <property type="entry name" value="L-BABP-like"/>
    <property type="match status" value="1"/>
</dbReference>
<dbReference type="FunFam" id="2.40.128.20:FF:000006">
    <property type="entry name" value="Fatty acid-binding protein, liver"/>
    <property type="match status" value="1"/>
</dbReference>
<dbReference type="Gene3D" id="2.40.128.20">
    <property type="match status" value="1"/>
</dbReference>
<dbReference type="InterPro" id="IPR012674">
    <property type="entry name" value="Calycin"/>
</dbReference>
<dbReference type="InterPro" id="IPR000463">
    <property type="entry name" value="Fatty_acid-bd"/>
</dbReference>
<dbReference type="InterPro" id="IPR031259">
    <property type="entry name" value="ILBP"/>
</dbReference>
<dbReference type="PANTHER" id="PTHR11955">
    <property type="entry name" value="FATTY ACID BINDING PROTEIN"/>
    <property type="match status" value="1"/>
</dbReference>
<dbReference type="Pfam" id="PF14651">
    <property type="entry name" value="Lipocalin_7"/>
    <property type="match status" value="1"/>
</dbReference>
<dbReference type="PRINTS" id="PR00178">
    <property type="entry name" value="FATTYACIDBP"/>
</dbReference>
<dbReference type="SUPFAM" id="SSF50814">
    <property type="entry name" value="Lipocalins"/>
    <property type="match status" value="1"/>
</dbReference>
<dbReference type="PROSITE" id="PS00214">
    <property type="entry name" value="FABP"/>
    <property type="match status" value="1"/>
</dbReference>